<gene>
    <name type="primary">ydgA</name>
    <name type="ordered locus">BSU05560</name>
</gene>
<reference key="1">
    <citation type="submission" date="1997-03" db="EMBL/GenBank/DDBJ databases">
        <title>A 148 kbp sequence of the region between 35 and 47 degree of the Bacillus subtilis genome.</title>
        <authorList>
            <person name="Kasahara Y."/>
            <person name="Nakai S."/>
            <person name="Lee S."/>
            <person name="Sadaie Y."/>
            <person name="Ogasawara N."/>
        </authorList>
    </citation>
    <scope>NUCLEOTIDE SEQUENCE [GENOMIC DNA]</scope>
    <source>
        <strain>168</strain>
    </source>
</reference>
<reference key="2">
    <citation type="journal article" date="1997" name="Nature">
        <title>The complete genome sequence of the Gram-positive bacterium Bacillus subtilis.</title>
        <authorList>
            <person name="Kunst F."/>
            <person name="Ogasawara N."/>
            <person name="Moszer I."/>
            <person name="Albertini A.M."/>
            <person name="Alloni G."/>
            <person name="Azevedo V."/>
            <person name="Bertero M.G."/>
            <person name="Bessieres P."/>
            <person name="Bolotin A."/>
            <person name="Borchert S."/>
            <person name="Borriss R."/>
            <person name="Boursier L."/>
            <person name="Brans A."/>
            <person name="Braun M."/>
            <person name="Brignell S.C."/>
            <person name="Bron S."/>
            <person name="Brouillet S."/>
            <person name="Bruschi C.V."/>
            <person name="Caldwell B."/>
            <person name="Capuano V."/>
            <person name="Carter N.M."/>
            <person name="Choi S.-K."/>
            <person name="Codani J.-J."/>
            <person name="Connerton I.F."/>
            <person name="Cummings N.J."/>
            <person name="Daniel R.A."/>
            <person name="Denizot F."/>
            <person name="Devine K.M."/>
            <person name="Duesterhoeft A."/>
            <person name="Ehrlich S.D."/>
            <person name="Emmerson P.T."/>
            <person name="Entian K.-D."/>
            <person name="Errington J."/>
            <person name="Fabret C."/>
            <person name="Ferrari E."/>
            <person name="Foulger D."/>
            <person name="Fritz C."/>
            <person name="Fujita M."/>
            <person name="Fujita Y."/>
            <person name="Fuma S."/>
            <person name="Galizzi A."/>
            <person name="Galleron N."/>
            <person name="Ghim S.-Y."/>
            <person name="Glaser P."/>
            <person name="Goffeau A."/>
            <person name="Golightly E.J."/>
            <person name="Grandi G."/>
            <person name="Guiseppi G."/>
            <person name="Guy B.J."/>
            <person name="Haga K."/>
            <person name="Haiech J."/>
            <person name="Harwood C.R."/>
            <person name="Henaut A."/>
            <person name="Hilbert H."/>
            <person name="Holsappel S."/>
            <person name="Hosono S."/>
            <person name="Hullo M.-F."/>
            <person name="Itaya M."/>
            <person name="Jones L.-M."/>
            <person name="Joris B."/>
            <person name="Karamata D."/>
            <person name="Kasahara Y."/>
            <person name="Klaerr-Blanchard M."/>
            <person name="Klein C."/>
            <person name="Kobayashi Y."/>
            <person name="Koetter P."/>
            <person name="Koningstein G."/>
            <person name="Krogh S."/>
            <person name="Kumano M."/>
            <person name="Kurita K."/>
            <person name="Lapidus A."/>
            <person name="Lardinois S."/>
            <person name="Lauber J."/>
            <person name="Lazarevic V."/>
            <person name="Lee S.-M."/>
            <person name="Levine A."/>
            <person name="Liu H."/>
            <person name="Masuda S."/>
            <person name="Mauel C."/>
            <person name="Medigue C."/>
            <person name="Medina N."/>
            <person name="Mellado R.P."/>
            <person name="Mizuno M."/>
            <person name="Moestl D."/>
            <person name="Nakai S."/>
            <person name="Noback M."/>
            <person name="Noone D."/>
            <person name="O'Reilly M."/>
            <person name="Ogawa K."/>
            <person name="Ogiwara A."/>
            <person name="Oudega B."/>
            <person name="Park S.-H."/>
            <person name="Parro V."/>
            <person name="Pohl T.M."/>
            <person name="Portetelle D."/>
            <person name="Porwollik S."/>
            <person name="Prescott A.M."/>
            <person name="Presecan E."/>
            <person name="Pujic P."/>
            <person name="Purnelle B."/>
            <person name="Rapoport G."/>
            <person name="Rey M."/>
            <person name="Reynolds S."/>
            <person name="Rieger M."/>
            <person name="Rivolta C."/>
            <person name="Rocha E."/>
            <person name="Roche B."/>
            <person name="Rose M."/>
            <person name="Sadaie Y."/>
            <person name="Sato T."/>
            <person name="Scanlan E."/>
            <person name="Schleich S."/>
            <person name="Schroeter R."/>
            <person name="Scoffone F."/>
            <person name="Sekiguchi J."/>
            <person name="Sekowska A."/>
            <person name="Seror S.J."/>
            <person name="Serror P."/>
            <person name="Shin B.-S."/>
            <person name="Soldo B."/>
            <person name="Sorokin A."/>
            <person name="Tacconi E."/>
            <person name="Takagi T."/>
            <person name="Takahashi H."/>
            <person name="Takemaru K."/>
            <person name="Takeuchi M."/>
            <person name="Tamakoshi A."/>
            <person name="Tanaka T."/>
            <person name="Terpstra P."/>
            <person name="Tognoni A."/>
            <person name="Tosato V."/>
            <person name="Uchiyama S."/>
            <person name="Vandenbol M."/>
            <person name="Vannier F."/>
            <person name="Vassarotti A."/>
            <person name="Viari A."/>
            <person name="Wambutt R."/>
            <person name="Wedler E."/>
            <person name="Wedler H."/>
            <person name="Weitzenegger T."/>
            <person name="Winters P."/>
            <person name="Wipat A."/>
            <person name="Yamamoto H."/>
            <person name="Yamane K."/>
            <person name="Yasumoto K."/>
            <person name="Yata K."/>
            <person name="Yoshida K."/>
            <person name="Yoshikawa H.-F."/>
            <person name="Zumstein E."/>
            <person name="Yoshikawa H."/>
            <person name="Danchin A."/>
        </authorList>
    </citation>
    <scope>NUCLEOTIDE SEQUENCE [LARGE SCALE GENOMIC DNA]</scope>
    <source>
        <strain>168</strain>
    </source>
</reference>
<dbReference type="EMBL" id="AB001488">
    <property type="protein sequence ID" value="BAA19389.1"/>
    <property type="molecule type" value="Genomic_DNA"/>
</dbReference>
<dbReference type="EMBL" id="AL009126">
    <property type="protein sequence ID" value="CAB12363.1"/>
    <property type="molecule type" value="Genomic_DNA"/>
</dbReference>
<dbReference type="PIR" id="C69782">
    <property type="entry name" value="C69782"/>
</dbReference>
<dbReference type="RefSeq" id="NP_388437.1">
    <property type="nucleotide sequence ID" value="NC_000964.3"/>
</dbReference>
<dbReference type="RefSeq" id="WP_003234151.1">
    <property type="nucleotide sequence ID" value="NZ_OZ025638.1"/>
</dbReference>
<dbReference type="FunCoup" id="P96699">
    <property type="interactions" value="125"/>
</dbReference>
<dbReference type="STRING" id="224308.BSU05560"/>
<dbReference type="PaxDb" id="224308-BSU05560"/>
<dbReference type="EnsemblBacteria" id="CAB12363">
    <property type="protein sequence ID" value="CAB12363"/>
    <property type="gene ID" value="BSU_05560"/>
</dbReference>
<dbReference type="GeneID" id="938065"/>
<dbReference type="KEGG" id="bsu:BSU05560"/>
<dbReference type="PATRIC" id="fig|224308.179.peg.598"/>
<dbReference type="eggNOG" id="ENOG5033I29">
    <property type="taxonomic scope" value="Bacteria"/>
</dbReference>
<dbReference type="InParanoid" id="P96699"/>
<dbReference type="OrthoDB" id="2899658at2"/>
<dbReference type="PhylomeDB" id="P96699"/>
<dbReference type="BioCyc" id="BSUB:BSU05560-MONOMER"/>
<dbReference type="Proteomes" id="UP000001570">
    <property type="component" value="Chromosome"/>
</dbReference>
<dbReference type="InterPro" id="IPR019618">
    <property type="entry name" value="Spore_germination_GerPA"/>
</dbReference>
<dbReference type="Pfam" id="PF10676">
    <property type="entry name" value="gerPA"/>
    <property type="match status" value="1"/>
</dbReference>
<feature type="chain" id="PRO_0000049502" description="Uncharacterized protein YdgA">
    <location>
        <begin position="1"/>
        <end position="80"/>
    </location>
</feature>
<feature type="region of interest" description="Disordered" evidence="1">
    <location>
        <begin position="57"/>
        <end position="80"/>
    </location>
</feature>
<evidence type="ECO:0000256" key="1">
    <source>
        <dbReference type="SAM" id="MobiDB-lite"/>
    </source>
</evidence>
<sequence>MPYQINIANIKINGVTQNGNIDVGPTVHNSHTANSKYFGANFSLGDLSPTSSLLNTGNIDSDVSDQDQIGNPSAPISNQI</sequence>
<protein>
    <recommendedName>
        <fullName>Uncharacterized protein YdgA</fullName>
    </recommendedName>
</protein>
<accession>P96699</accession>
<name>YDGA_BACSU</name>
<keyword id="KW-1185">Reference proteome</keyword>
<proteinExistence type="predicted"/>
<organism>
    <name type="scientific">Bacillus subtilis (strain 168)</name>
    <dbReference type="NCBI Taxonomy" id="224308"/>
    <lineage>
        <taxon>Bacteria</taxon>
        <taxon>Bacillati</taxon>
        <taxon>Bacillota</taxon>
        <taxon>Bacilli</taxon>
        <taxon>Bacillales</taxon>
        <taxon>Bacillaceae</taxon>
        <taxon>Bacillus</taxon>
    </lineage>
</organism>